<accession>B0JW21</accession>
<evidence type="ECO:0000255" key="1">
    <source>
        <dbReference type="HAMAP-Rule" id="MF_01820"/>
    </source>
</evidence>
<evidence type="ECO:0000255" key="2">
    <source>
        <dbReference type="PROSITE-ProRule" id="PRU01058"/>
    </source>
</evidence>
<evidence type="ECO:0000256" key="3">
    <source>
        <dbReference type="SAM" id="MobiDB-lite"/>
    </source>
</evidence>
<proteinExistence type="inferred from homology"/>
<comment type="function">
    <text evidence="1">One of several proteins that assist in the late maturation steps of the functional core of the 30S ribosomal subunit. Helps release RbfA from mature subunits. May play a role in the assembly of ribosomal proteins into the subunit. Circularly permuted GTPase that catalyzes slow GTP hydrolysis, GTPase activity is stimulated by the 30S ribosomal subunit.</text>
</comment>
<comment type="cofactor">
    <cofactor evidence="1">
        <name>Zn(2+)</name>
        <dbReference type="ChEBI" id="CHEBI:29105"/>
    </cofactor>
    <text evidence="1">Binds 1 zinc ion per subunit.</text>
</comment>
<comment type="subunit">
    <text evidence="1">Monomer. Associates with 30S ribosomal subunit, binds 16S rRNA.</text>
</comment>
<comment type="subcellular location">
    <subcellularLocation>
        <location evidence="1">Cytoplasm</location>
    </subcellularLocation>
</comment>
<comment type="similarity">
    <text evidence="1">Belongs to the TRAFAC class YlqF/YawG GTPase family. RsgA subfamily.</text>
</comment>
<sequence>MVDAQLTDLYGTVVAVQANFYQVRLDSAVMGENLLCTRRARLQKIGQSVMVGDRVRVEEANFGDQQGAIAEVLPRSTEIDRPAVANIEQILLVFALAEPVLDPWLISRFLVKAESTGLEIAVCVNKIDLGEPEQIEVWGDRLAGWGYRPFFVSVEKNRGFEALLAQLNHKITLLAGPSGVGKSSLINCLIPEINQRVGDVSGKLQKGRHTTRHVQLFALPNRGLLADSPGFNQPDINCLPEELTFYFPEVRARLALGNCQFNDCTHRREPNCVVRGDWERYQHYLEFLEEAIAREQSLQKTSTKESSLKLKIKEAGQETYEPKLANKKYRRPSRRGKNQDQERYENKTLQDIYNDDSE</sequence>
<gene>
    <name evidence="1" type="primary">rsgA</name>
    <name type="ordered locus">MAE_49420</name>
</gene>
<dbReference type="EC" id="3.6.1.-" evidence="1"/>
<dbReference type="EMBL" id="AP009552">
    <property type="protein sequence ID" value="BAG04764.1"/>
    <property type="molecule type" value="Genomic_DNA"/>
</dbReference>
<dbReference type="RefSeq" id="WP_012267409.1">
    <property type="nucleotide sequence ID" value="NC_010296.1"/>
</dbReference>
<dbReference type="SMR" id="B0JW21"/>
<dbReference type="STRING" id="449447.MAE_49420"/>
<dbReference type="PaxDb" id="449447-MAE_49420"/>
<dbReference type="EnsemblBacteria" id="BAG04764">
    <property type="protein sequence ID" value="BAG04764"/>
    <property type="gene ID" value="MAE_49420"/>
</dbReference>
<dbReference type="KEGG" id="mar:MAE_49420"/>
<dbReference type="PATRIC" id="fig|449447.4.peg.4499"/>
<dbReference type="eggNOG" id="COG1162">
    <property type="taxonomic scope" value="Bacteria"/>
</dbReference>
<dbReference type="HOGENOM" id="CLU_033617_2_1_3"/>
<dbReference type="BioCyc" id="MAER449447:MAE_RS21435-MONOMER"/>
<dbReference type="Proteomes" id="UP000001510">
    <property type="component" value="Chromosome"/>
</dbReference>
<dbReference type="GO" id="GO:0005737">
    <property type="term" value="C:cytoplasm"/>
    <property type="evidence" value="ECO:0007669"/>
    <property type="project" value="UniProtKB-SubCell"/>
</dbReference>
<dbReference type="GO" id="GO:0005525">
    <property type="term" value="F:GTP binding"/>
    <property type="evidence" value="ECO:0007669"/>
    <property type="project" value="UniProtKB-UniRule"/>
</dbReference>
<dbReference type="GO" id="GO:0003924">
    <property type="term" value="F:GTPase activity"/>
    <property type="evidence" value="ECO:0007669"/>
    <property type="project" value="UniProtKB-UniRule"/>
</dbReference>
<dbReference type="GO" id="GO:0046872">
    <property type="term" value="F:metal ion binding"/>
    <property type="evidence" value="ECO:0007669"/>
    <property type="project" value="UniProtKB-KW"/>
</dbReference>
<dbReference type="GO" id="GO:0019843">
    <property type="term" value="F:rRNA binding"/>
    <property type="evidence" value="ECO:0007669"/>
    <property type="project" value="UniProtKB-KW"/>
</dbReference>
<dbReference type="GO" id="GO:0042274">
    <property type="term" value="P:ribosomal small subunit biogenesis"/>
    <property type="evidence" value="ECO:0007669"/>
    <property type="project" value="UniProtKB-UniRule"/>
</dbReference>
<dbReference type="CDD" id="cd01854">
    <property type="entry name" value="YjeQ_EngC"/>
    <property type="match status" value="1"/>
</dbReference>
<dbReference type="Gene3D" id="2.40.50.140">
    <property type="entry name" value="Nucleic acid-binding proteins"/>
    <property type="match status" value="1"/>
</dbReference>
<dbReference type="Gene3D" id="3.40.50.300">
    <property type="entry name" value="P-loop containing nucleotide triphosphate hydrolases"/>
    <property type="match status" value="1"/>
</dbReference>
<dbReference type="Gene3D" id="1.10.40.50">
    <property type="entry name" value="Probable gtpase engc, domain 3"/>
    <property type="match status" value="1"/>
</dbReference>
<dbReference type="HAMAP" id="MF_01820">
    <property type="entry name" value="GTPase_RsgA"/>
    <property type="match status" value="1"/>
</dbReference>
<dbReference type="InterPro" id="IPR030378">
    <property type="entry name" value="G_CP_dom"/>
</dbReference>
<dbReference type="InterPro" id="IPR012340">
    <property type="entry name" value="NA-bd_OB-fold"/>
</dbReference>
<dbReference type="InterPro" id="IPR027417">
    <property type="entry name" value="P-loop_NTPase"/>
</dbReference>
<dbReference type="InterPro" id="IPR004881">
    <property type="entry name" value="Ribosome_biogen_GTPase_RsgA"/>
</dbReference>
<dbReference type="InterPro" id="IPR010914">
    <property type="entry name" value="RsgA_GTPase_dom"/>
</dbReference>
<dbReference type="NCBIfam" id="NF008932">
    <property type="entry name" value="PRK12289.1"/>
    <property type="match status" value="1"/>
</dbReference>
<dbReference type="NCBIfam" id="TIGR00157">
    <property type="entry name" value="ribosome small subunit-dependent GTPase A"/>
    <property type="match status" value="1"/>
</dbReference>
<dbReference type="PANTHER" id="PTHR32120">
    <property type="entry name" value="SMALL RIBOSOMAL SUBUNIT BIOGENESIS GTPASE RSGA"/>
    <property type="match status" value="1"/>
</dbReference>
<dbReference type="PANTHER" id="PTHR32120:SF11">
    <property type="entry name" value="SMALL RIBOSOMAL SUBUNIT BIOGENESIS GTPASE RSGA 1, MITOCHONDRIAL-RELATED"/>
    <property type="match status" value="1"/>
</dbReference>
<dbReference type="Pfam" id="PF03193">
    <property type="entry name" value="RsgA_GTPase"/>
    <property type="match status" value="1"/>
</dbReference>
<dbReference type="SUPFAM" id="SSF50249">
    <property type="entry name" value="Nucleic acid-binding proteins"/>
    <property type="match status" value="1"/>
</dbReference>
<dbReference type="SUPFAM" id="SSF52540">
    <property type="entry name" value="P-loop containing nucleoside triphosphate hydrolases"/>
    <property type="match status" value="1"/>
</dbReference>
<dbReference type="PROSITE" id="PS50936">
    <property type="entry name" value="ENGC_GTPASE"/>
    <property type="match status" value="1"/>
</dbReference>
<dbReference type="PROSITE" id="PS51721">
    <property type="entry name" value="G_CP"/>
    <property type="match status" value="1"/>
</dbReference>
<feature type="chain" id="PRO_1000188101" description="Small ribosomal subunit biogenesis GTPase RsgA">
    <location>
        <begin position="1"/>
        <end position="358"/>
    </location>
</feature>
<feature type="domain" description="CP-type G" evidence="2">
    <location>
        <begin position="76"/>
        <end position="234"/>
    </location>
</feature>
<feature type="region of interest" description="Disordered" evidence="3">
    <location>
        <begin position="319"/>
        <end position="358"/>
    </location>
</feature>
<feature type="compositionally biased region" description="Basic residues" evidence="3">
    <location>
        <begin position="325"/>
        <end position="336"/>
    </location>
</feature>
<feature type="compositionally biased region" description="Basic and acidic residues" evidence="3">
    <location>
        <begin position="337"/>
        <end position="348"/>
    </location>
</feature>
<feature type="binding site" evidence="1">
    <location>
        <begin position="125"/>
        <end position="128"/>
    </location>
    <ligand>
        <name>GTP</name>
        <dbReference type="ChEBI" id="CHEBI:37565"/>
    </ligand>
</feature>
<feature type="binding site" evidence="1">
    <location>
        <begin position="176"/>
        <end position="184"/>
    </location>
    <ligand>
        <name>GTP</name>
        <dbReference type="ChEBI" id="CHEBI:37565"/>
    </ligand>
</feature>
<feature type="binding site" evidence="1">
    <location>
        <position position="259"/>
    </location>
    <ligand>
        <name>Zn(2+)</name>
        <dbReference type="ChEBI" id="CHEBI:29105"/>
    </ligand>
</feature>
<feature type="binding site" evidence="1">
    <location>
        <position position="264"/>
    </location>
    <ligand>
        <name>Zn(2+)</name>
        <dbReference type="ChEBI" id="CHEBI:29105"/>
    </ligand>
</feature>
<feature type="binding site" evidence="1">
    <location>
        <position position="266"/>
    </location>
    <ligand>
        <name>Zn(2+)</name>
        <dbReference type="ChEBI" id="CHEBI:29105"/>
    </ligand>
</feature>
<feature type="binding site" evidence="1">
    <location>
        <position position="272"/>
    </location>
    <ligand>
        <name>Zn(2+)</name>
        <dbReference type="ChEBI" id="CHEBI:29105"/>
    </ligand>
</feature>
<reference key="1">
    <citation type="journal article" date="2007" name="DNA Res.">
        <title>Complete genomic structure of the bloom-forming toxic cyanobacterium Microcystis aeruginosa NIES-843.</title>
        <authorList>
            <person name="Kaneko T."/>
            <person name="Nakajima N."/>
            <person name="Okamoto S."/>
            <person name="Suzuki I."/>
            <person name="Tanabe Y."/>
            <person name="Tamaoki M."/>
            <person name="Nakamura Y."/>
            <person name="Kasai F."/>
            <person name="Watanabe A."/>
            <person name="Kawashima K."/>
            <person name="Kishida Y."/>
            <person name="Ono A."/>
            <person name="Shimizu Y."/>
            <person name="Takahashi C."/>
            <person name="Minami C."/>
            <person name="Fujishiro T."/>
            <person name="Kohara M."/>
            <person name="Katoh M."/>
            <person name="Nakazaki N."/>
            <person name="Nakayama S."/>
            <person name="Yamada M."/>
            <person name="Tabata S."/>
            <person name="Watanabe M.M."/>
        </authorList>
    </citation>
    <scope>NUCLEOTIDE SEQUENCE [LARGE SCALE GENOMIC DNA]</scope>
    <source>
        <strain>NIES-843 / IAM M-247</strain>
    </source>
</reference>
<keyword id="KW-0963">Cytoplasm</keyword>
<keyword id="KW-0342">GTP-binding</keyword>
<keyword id="KW-0378">Hydrolase</keyword>
<keyword id="KW-0479">Metal-binding</keyword>
<keyword id="KW-0547">Nucleotide-binding</keyword>
<keyword id="KW-0690">Ribosome biogenesis</keyword>
<keyword id="KW-0694">RNA-binding</keyword>
<keyword id="KW-0699">rRNA-binding</keyword>
<keyword id="KW-0862">Zinc</keyword>
<protein>
    <recommendedName>
        <fullName evidence="1">Small ribosomal subunit biogenesis GTPase RsgA</fullName>
        <ecNumber evidence="1">3.6.1.-</ecNumber>
    </recommendedName>
</protein>
<organism>
    <name type="scientific">Microcystis aeruginosa (strain NIES-843 / IAM M-2473)</name>
    <dbReference type="NCBI Taxonomy" id="449447"/>
    <lineage>
        <taxon>Bacteria</taxon>
        <taxon>Bacillati</taxon>
        <taxon>Cyanobacteriota</taxon>
        <taxon>Cyanophyceae</taxon>
        <taxon>Oscillatoriophycideae</taxon>
        <taxon>Chroococcales</taxon>
        <taxon>Microcystaceae</taxon>
        <taxon>Microcystis</taxon>
    </lineage>
</organism>
<name>RSGA_MICAN</name>